<feature type="chain" id="PRO_0000171742" description="C-&gt;U-editing enzyme APOBEC-1">
    <location>
        <begin position="1"/>
        <end position="236"/>
    </location>
</feature>
<feature type="domain" description="CMP/dCMP-type deaminase" evidence="3">
    <location>
        <begin position="10"/>
        <end position="134"/>
    </location>
</feature>
<feature type="active site" description="Proton donor" evidence="2">
    <location>
        <position position="63"/>
    </location>
</feature>
<feature type="binding site" evidence="2">
    <location>
        <position position="61"/>
    </location>
    <ligand>
        <name>Zn(2+)</name>
        <dbReference type="ChEBI" id="CHEBI:29105"/>
        <note>catalytic</note>
    </ligand>
</feature>
<feature type="binding site" evidence="2">
    <location>
        <position position="93"/>
    </location>
    <ligand>
        <name>Zn(2+)</name>
        <dbReference type="ChEBI" id="CHEBI:29105"/>
        <note>catalytic</note>
    </ligand>
</feature>
<feature type="binding site" evidence="2">
    <location>
        <position position="96"/>
    </location>
    <ligand>
        <name>Zn(2+)</name>
        <dbReference type="ChEBI" id="CHEBI:29105"/>
        <note>catalytic</note>
    </ligand>
</feature>
<feature type="sequence variant" id="VAR_013779" description="In dbSNP:rs2302515." evidence="9 10 12 13">
    <original>M</original>
    <variation>I</variation>
    <location>
        <position position="80"/>
    </location>
</feature>
<feature type="sequence variant" id="VAR_048720" description="In dbSNP:rs12820011.">
    <original>R</original>
    <variation>K</variation>
    <location>
        <position position="236"/>
    </location>
</feature>
<feature type="sequence conflict" description="In Ref. 5; AAD10701." evidence="17" ref="5">
    <original>S</original>
    <variation>T</variation>
    <location>
        <position position="53"/>
    </location>
</feature>
<feature type="sequence conflict" description="In Ref. 5; AAD10701." evidence="17" ref="5">
    <original>S</original>
    <variation>T</variation>
    <location>
        <position position="83"/>
    </location>
</feature>
<name>ABEC1_HUMAN</name>
<reference key="1">
    <citation type="journal article" date="1994" name="Nucleic Acids Res.">
        <title>Molecular cloning of a human small intestinal apolipoprotein B mRNA editing protein.</title>
        <authorList>
            <person name="Hadjiagapiou C."/>
            <person name="Giannoni F."/>
            <person name="Funahashi T."/>
            <person name="Skarosi S.F."/>
            <person name="Davidson N.O."/>
        </authorList>
    </citation>
    <scope>NUCLEOTIDE SEQUENCE [MRNA]</scope>
    <scope>VARIANT ILE-80</scope>
    <source>
        <tissue>Intestine</tissue>
    </source>
</reference>
<reference key="2">
    <citation type="journal article" date="1994" name="Proc. Natl. Acad. Sci. U.S.A.">
        <title>Dimeric structure of a human apolipoprotein B mRNA editing protein and cloning and chromosomal localization of its gene.</title>
        <authorList>
            <person name="Lau P.P."/>
            <person name="Zhu H.-J."/>
            <person name="Baldini A."/>
            <person name="Charnsangavej C."/>
            <person name="Chan L."/>
        </authorList>
    </citation>
    <scope>NUCLEOTIDE SEQUENCE [MRNA]</scope>
    <scope>SUBUNIT</scope>
    <scope>TISSUE SPECIFICITY</scope>
    <scope>VARIANT ILE-80</scope>
    <source>
        <tissue>Small intestine</tissue>
    </source>
</reference>
<reference key="3">
    <citation type="journal article" date="1997" name="J. Lipid Res.">
        <title>Characterization of the human apobec-1 gene: expression in gastrointestinal tissues determined by alternative splicing with production of a novel truncated peptide.</title>
        <authorList>
            <person name="Hirano K."/>
            <person name="Min J."/>
            <person name="Funahashi T."/>
            <person name="Baunoch D.A."/>
            <person name="Davidson N.O."/>
        </authorList>
    </citation>
    <scope>NUCLEOTIDE SEQUENCE [MRNA]</scope>
    <scope>VARIANT ILE-80</scope>
    <source>
        <tissue>Osteosarcoma</tissue>
    </source>
</reference>
<reference key="4">
    <citation type="journal article" date="1998" name="Genomics">
        <title>Human apolipoprotein B RNA editing deaminase gene (APOBEC1).</title>
        <authorList>
            <person name="Fujino T."/>
            <person name="Navaratnam N."/>
            <person name="Scott J."/>
        </authorList>
    </citation>
    <scope>NUCLEOTIDE SEQUENCE [GENOMIC DNA]</scope>
    <scope>VARIANT ILE-80</scope>
    <source>
        <tissue>Peripheral blood leukocyte</tissue>
    </source>
</reference>
<reference key="5">
    <citation type="submission" date="1996-11" db="EMBL/GenBank/DDBJ databases">
        <title>A novel mutation in exon 3 of the human apoB editing protein gene.</title>
        <authorList>
            <person name="Hong S.H."/>
            <person name="Kim J.Q."/>
            <person name="Lee C.C."/>
        </authorList>
    </citation>
    <scope>NUCLEOTIDE SEQUENCE [MRNA] OF 16-147</scope>
</reference>
<reference key="6">
    <citation type="journal article" date="1997" name="J. Biol. Chem.">
        <title>Cloning of an Apobec-1-binding protein that also interacts with apolipoprotein B mRNA and evidence for its involvement in RNA editing.</title>
        <authorList>
            <person name="Lau P.P."/>
            <person name="Zhu H.J."/>
            <person name="Nakamuta M."/>
            <person name="Chan L."/>
        </authorList>
    </citation>
    <scope>INTERACTION WITH HNRPAB</scope>
</reference>
<reference key="7">
    <citation type="journal article" date="2001" name="Biochem. Biophys. Res. Commun.">
        <title>Two-hybrid cloning identifies an RNA-binding protein, GRY-RBP, as a component of apobec-1 editosome.</title>
        <authorList>
            <person name="Lau P.P."/>
            <person name="Chang B.-H."/>
            <person name="Chan L."/>
        </authorList>
    </citation>
    <scope>INTERACTION WITH SYNCRIP</scope>
</reference>
<reference key="8">
    <citation type="journal article" date="2002" name="Am. J. Hum. Genet.">
        <title>C--&gt;U editing of neurofibromatosis 1 mRNA occurs in tumors that express both the type II transcript and apobec-1, the catalytic subunit of the apolipoprotein B mRNA-editing enzyme.</title>
        <authorList>
            <person name="Mukhopadhyay D."/>
            <person name="Anant S."/>
            <person name="Lee R.M."/>
            <person name="Kennedy S."/>
            <person name="Viskochil D."/>
            <person name="Davidson N.O."/>
        </authorList>
    </citation>
    <scope>FUNCTION IN NF1 EDITING</scope>
    <scope>CATALYTIC ACTIVITY</scope>
</reference>
<reference key="9">
    <citation type="journal article" date="2012" name="Arterioscler. Thromb. Vasc. Biol.">
        <title>Proprotein convertase subtilisin/kexin type 9 interacts with apolipoprotein B and prevents its intracellular degradation, irrespective of the low-density lipoprotein receptor.</title>
        <authorList>
            <person name="Sun H."/>
            <person name="Samarghandi A."/>
            <person name="Zhang N."/>
            <person name="Yao Z."/>
            <person name="Xiong M."/>
            <person name="Teng B.B."/>
        </authorList>
    </citation>
    <scope>SUBCELLULAR LOCATION</scope>
</reference>
<reference key="10">
    <citation type="journal article" date="2014" name="EMBO Rep.">
        <title>C to U RNA editing mediated by APOBEC1 requires RNA-binding protein RBM47.</title>
        <authorList>
            <person name="Fossat N."/>
            <person name="Tourle K."/>
            <person name="Radziewic T."/>
            <person name="Barratt K."/>
            <person name="Liebhold D."/>
            <person name="Studdert J.B."/>
            <person name="Power M."/>
            <person name="Jones V."/>
            <person name="Loebel D.A."/>
            <person name="Tam P.P."/>
        </authorList>
    </citation>
    <scope>FUNCTION</scope>
    <scope>INTERACTION WITH RBM47</scope>
    <scope>SUBCELLULAR LOCATION</scope>
</reference>
<reference key="11">
    <citation type="journal article" date="2019" name="J. Mol. Biol.">
        <title>Comparison of RNA Editing Activity of APOBEC1-A1CF and APOBEC1-RBM47 Complexes Reconstituted in HEK293T Cells.</title>
        <authorList>
            <person name="Wolfe A.D."/>
            <person name="Arnold D.B."/>
            <person name="Chen X.S."/>
        </authorList>
    </citation>
    <scope>FUNCTION</scope>
    <scope>CATALYTIC ACTIVITY</scope>
    <scope>INTERACTION WITH A1CF AND RBM47</scope>
</reference>
<dbReference type="EC" id="3.5.4.-" evidence="5 8"/>
<dbReference type="EC" id="3.5.4.36" evidence="5"/>
<dbReference type="EMBL" id="L25877">
    <property type="protein sequence ID" value="AAA86766.1"/>
    <property type="molecule type" value="mRNA"/>
</dbReference>
<dbReference type="EMBL" id="L26234">
    <property type="protein sequence ID" value="AAA64230.1"/>
    <property type="molecule type" value="mRNA"/>
</dbReference>
<dbReference type="EMBL" id="U72891">
    <property type="protein sequence ID" value="AAD00185.1"/>
    <property type="molecule type" value="mRNA"/>
</dbReference>
<dbReference type="EMBL" id="AB009426">
    <property type="protein sequence ID" value="BAA23882.1"/>
    <property type="molecule type" value="Genomic_DNA"/>
</dbReference>
<dbReference type="EMBL" id="U78720">
    <property type="protein sequence ID" value="AAD10701.1"/>
    <property type="molecule type" value="mRNA"/>
</dbReference>
<dbReference type="CCDS" id="CCDS8579.1"/>
<dbReference type="PIR" id="I59323">
    <property type="entry name" value="I59323"/>
</dbReference>
<dbReference type="RefSeq" id="NP_001291495.1">
    <property type="nucleotide sequence ID" value="NM_001304566.1"/>
</dbReference>
<dbReference type="RefSeq" id="NP_001635.2">
    <property type="nucleotide sequence ID" value="NM_001644.5"/>
</dbReference>
<dbReference type="RefSeq" id="NP_005880.2">
    <property type="nucleotide sequence ID" value="NM_005889.3"/>
</dbReference>
<dbReference type="PDB" id="6X91">
    <property type="method" value="X-ray"/>
    <property type="resolution" value="3.51 A"/>
    <property type="chains" value="A/B/C/D/E/F/G/H=15-236"/>
</dbReference>
<dbReference type="PDBsum" id="6X91"/>
<dbReference type="SMR" id="P41238"/>
<dbReference type="BioGRID" id="106836">
    <property type="interactions" value="19"/>
</dbReference>
<dbReference type="ComplexPortal" id="CPX-1097">
    <property type="entry name" value="C-to-U editosome complex"/>
</dbReference>
<dbReference type="FunCoup" id="P41238">
    <property type="interactions" value="14"/>
</dbReference>
<dbReference type="IntAct" id="P41238">
    <property type="interactions" value="8"/>
</dbReference>
<dbReference type="STRING" id="9606.ENSP00000229304"/>
<dbReference type="DrugBank" id="DB14533">
    <property type="generic name" value="Zinc chloride"/>
</dbReference>
<dbReference type="DrugBank" id="DB14548">
    <property type="generic name" value="Zinc sulfate, unspecified form"/>
</dbReference>
<dbReference type="iPTMnet" id="P41238"/>
<dbReference type="PhosphoSitePlus" id="P41238"/>
<dbReference type="BioMuta" id="APOBEC1"/>
<dbReference type="DMDM" id="152013530"/>
<dbReference type="PaxDb" id="9606-ENSP00000229304"/>
<dbReference type="Antibodypedia" id="22955">
    <property type="antibodies" value="161 antibodies from 26 providers"/>
</dbReference>
<dbReference type="DNASU" id="339"/>
<dbReference type="Ensembl" id="ENST00000229304.5">
    <property type="protein sequence ID" value="ENSP00000229304.4"/>
    <property type="gene ID" value="ENSG00000111701.7"/>
</dbReference>
<dbReference type="GeneID" id="339"/>
<dbReference type="KEGG" id="hsa:339"/>
<dbReference type="MANE-Select" id="ENST00000229304.5">
    <property type="protein sequence ID" value="ENSP00000229304.4"/>
    <property type="RefSeq nucleotide sequence ID" value="NM_001644.5"/>
    <property type="RefSeq protein sequence ID" value="NP_001635.2"/>
</dbReference>
<dbReference type="UCSC" id="uc001qtb.4">
    <property type="organism name" value="human"/>
</dbReference>
<dbReference type="AGR" id="HGNC:604"/>
<dbReference type="CTD" id="339"/>
<dbReference type="DisGeNET" id="339"/>
<dbReference type="GeneCards" id="APOBEC1"/>
<dbReference type="HGNC" id="HGNC:604">
    <property type="gene designation" value="APOBEC1"/>
</dbReference>
<dbReference type="HPA" id="ENSG00000111701">
    <property type="expression patterns" value="Tissue enriched (intestine)"/>
</dbReference>
<dbReference type="MIM" id="600130">
    <property type="type" value="gene"/>
</dbReference>
<dbReference type="neXtProt" id="NX_P41238"/>
<dbReference type="OpenTargets" id="ENSG00000111701"/>
<dbReference type="PharmGKB" id="PA24889"/>
<dbReference type="VEuPathDB" id="HostDB:ENSG00000111701"/>
<dbReference type="eggNOG" id="ENOG502SNW2">
    <property type="taxonomic scope" value="Eukaryota"/>
</dbReference>
<dbReference type="GeneTree" id="ENSGT00940000161190"/>
<dbReference type="HOGENOM" id="CLU_080056_3_0_1"/>
<dbReference type="InParanoid" id="P41238"/>
<dbReference type="OMA" id="LTLQNCH"/>
<dbReference type="OrthoDB" id="5956704at2759"/>
<dbReference type="PAN-GO" id="P41238">
    <property type="GO annotations" value="6 GO annotations based on evolutionary models"/>
</dbReference>
<dbReference type="PhylomeDB" id="P41238"/>
<dbReference type="TreeFam" id="TF331356"/>
<dbReference type="BRENDA" id="3.5.4.36">
    <property type="organism ID" value="2681"/>
</dbReference>
<dbReference type="BRENDA" id="3.5.4.37">
    <property type="organism ID" value="2681"/>
</dbReference>
<dbReference type="PathwayCommons" id="P41238"/>
<dbReference type="Reactome" id="R-HSA-72200">
    <property type="pathway name" value="mRNA Editing: C to U Conversion"/>
</dbReference>
<dbReference type="Reactome" id="R-HSA-75094">
    <property type="pathway name" value="Formation of the Editosome"/>
</dbReference>
<dbReference type="SignaLink" id="P41238"/>
<dbReference type="BioGRID-ORCS" id="339">
    <property type="hits" value="11 hits in 1147 CRISPR screens"/>
</dbReference>
<dbReference type="GeneWiki" id="APOBEC1"/>
<dbReference type="GenomeRNAi" id="339"/>
<dbReference type="Pharos" id="P41238">
    <property type="development level" value="Tbio"/>
</dbReference>
<dbReference type="PRO" id="PR:P41238"/>
<dbReference type="Proteomes" id="UP000005640">
    <property type="component" value="Chromosome 12"/>
</dbReference>
<dbReference type="RNAct" id="P41238">
    <property type="molecule type" value="protein"/>
</dbReference>
<dbReference type="Bgee" id="ENSG00000111701">
    <property type="expression patterns" value="Expressed in jejunal mucosa and 24 other cell types or tissues"/>
</dbReference>
<dbReference type="ExpressionAtlas" id="P41238">
    <property type="expression patterns" value="baseline and differential"/>
</dbReference>
<dbReference type="GO" id="GO:0030895">
    <property type="term" value="C:apolipoprotein B mRNA editing enzyme complex"/>
    <property type="evidence" value="ECO:0000314"/>
    <property type="project" value="UniProtKB"/>
</dbReference>
<dbReference type="GO" id="GO:0005737">
    <property type="term" value="C:cytoplasm"/>
    <property type="evidence" value="ECO:0000314"/>
    <property type="project" value="UniProtKB"/>
</dbReference>
<dbReference type="GO" id="GO:0045293">
    <property type="term" value="C:mRNA editing complex"/>
    <property type="evidence" value="ECO:0000303"/>
    <property type="project" value="ComplexPortal"/>
</dbReference>
<dbReference type="GO" id="GO:0005654">
    <property type="term" value="C:nucleoplasm"/>
    <property type="evidence" value="ECO:0000304"/>
    <property type="project" value="Reactome"/>
</dbReference>
<dbReference type="GO" id="GO:0005634">
    <property type="term" value="C:nucleus"/>
    <property type="evidence" value="ECO:0000314"/>
    <property type="project" value="UniProtKB"/>
</dbReference>
<dbReference type="GO" id="GO:0004126">
    <property type="term" value="F:cytidine deaminase activity"/>
    <property type="evidence" value="ECO:0000318"/>
    <property type="project" value="GO_Central"/>
</dbReference>
<dbReference type="GO" id="GO:0035925">
    <property type="term" value="F:mRNA 3'-UTR AU-rich region binding"/>
    <property type="evidence" value="ECO:0007669"/>
    <property type="project" value="Ensembl"/>
</dbReference>
<dbReference type="GO" id="GO:0003723">
    <property type="term" value="F:RNA binding"/>
    <property type="evidence" value="ECO:0000318"/>
    <property type="project" value="GO_Central"/>
</dbReference>
<dbReference type="GO" id="GO:0008270">
    <property type="term" value="F:zinc ion binding"/>
    <property type="evidence" value="ECO:0000304"/>
    <property type="project" value="ProtInc"/>
</dbReference>
<dbReference type="GO" id="GO:0141166">
    <property type="term" value="P:chromosomal 5-methylcytosine DNA demethylation pathway"/>
    <property type="evidence" value="ECO:0000303"/>
    <property type="project" value="ComplexPortal"/>
</dbReference>
<dbReference type="GO" id="GO:0016554">
    <property type="term" value="P:cytidine to uridine editing"/>
    <property type="evidence" value="ECO:0000314"/>
    <property type="project" value="UniProtKB"/>
</dbReference>
<dbReference type="GO" id="GO:0051649">
    <property type="term" value="P:establishment of localization in cell"/>
    <property type="evidence" value="ECO:0007669"/>
    <property type="project" value="Ensembl"/>
</dbReference>
<dbReference type="GO" id="GO:0006629">
    <property type="term" value="P:lipid metabolic process"/>
    <property type="evidence" value="ECO:0000304"/>
    <property type="project" value="ProtInc"/>
</dbReference>
<dbReference type="GO" id="GO:0042158">
    <property type="term" value="P:lipoprotein biosynthetic process"/>
    <property type="evidence" value="ECO:0007669"/>
    <property type="project" value="Ensembl"/>
</dbReference>
<dbReference type="GO" id="GO:0042953">
    <property type="term" value="P:lipoprotein transport"/>
    <property type="evidence" value="ECO:0007669"/>
    <property type="project" value="Ensembl"/>
</dbReference>
<dbReference type="GO" id="GO:0016556">
    <property type="term" value="P:mRNA modification"/>
    <property type="evidence" value="ECO:0000314"/>
    <property type="project" value="ComplexPortal"/>
</dbReference>
<dbReference type="GO" id="GO:0006397">
    <property type="term" value="P:mRNA processing"/>
    <property type="evidence" value="ECO:0007669"/>
    <property type="project" value="UniProtKB-KW"/>
</dbReference>
<dbReference type="GO" id="GO:0048255">
    <property type="term" value="P:mRNA stabilization"/>
    <property type="evidence" value="ECO:0007669"/>
    <property type="project" value="Ensembl"/>
</dbReference>
<dbReference type="GO" id="GO:2000623">
    <property type="term" value="P:negative regulation of nuclear-transcribed mRNA catabolic process, nonsense-mediated decay"/>
    <property type="evidence" value="ECO:0000314"/>
    <property type="project" value="ComplexPortal"/>
</dbReference>
<dbReference type="GO" id="GO:0090209">
    <property type="term" value="P:negative regulation of triglyceride metabolic process"/>
    <property type="evidence" value="ECO:0007669"/>
    <property type="project" value="Ensembl"/>
</dbReference>
<dbReference type="GO" id="GO:0044029">
    <property type="term" value="P:positive regulation of gene expression via chromosomal CpG island demethylation"/>
    <property type="evidence" value="ECO:0000250"/>
    <property type="project" value="UniProtKB"/>
</dbReference>
<dbReference type="GO" id="GO:0042127">
    <property type="term" value="P:regulation of cell population proliferation"/>
    <property type="evidence" value="ECO:0007669"/>
    <property type="project" value="Ensembl"/>
</dbReference>
<dbReference type="GO" id="GO:0010332">
    <property type="term" value="P:response to gamma radiation"/>
    <property type="evidence" value="ECO:0007669"/>
    <property type="project" value="Ensembl"/>
</dbReference>
<dbReference type="GO" id="GO:0006641">
    <property type="term" value="P:triglyceride metabolic process"/>
    <property type="evidence" value="ECO:0007669"/>
    <property type="project" value="Ensembl"/>
</dbReference>
<dbReference type="CDD" id="cd01283">
    <property type="entry name" value="cytidine_deaminase"/>
    <property type="match status" value="1"/>
</dbReference>
<dbReference type="FunFam" id="3.40.140.10:FF:000049">
    <property type="entry name" value="C-&gt;U-editing enzyme APOBEC-1 isoform X2"/>
    <property type="match status" value="1"/>
</dbReference>
<dbReference type="Gene3D" id="3.40.140.10">
    <property type="entry name" value="Cytidine Deaminase, domain 2"/>
    <property type="match status" value="1"/>
</dbReference>
<dbReference type="InterPro" id="IPR016192">
    <property type="entry name" value="APOBEC/CMP_deaminase_Zn-bd"/>
</dbReference>
<dbReference type="InterPro" id="IPR041547">
    <property type="entry name" value="APOBEC1"/>
</dbReference>
<dbReference type="InterPro" id="IPR050610">
    <property type="entry name" value="APOBEC_Cyt_Deaminase"/>
</dbReference>
<dbReference type="InterPro" id="IPR002125">
    <property type="entry name" value="CMP_dCMP_dom"/>
</dbReference>
<dbReference type="InterPro" id="IPR016193">
    <property type="entry name" value="Cytidine_deaminase-like"/>
</dbReference>
<dbReference type="PANTHER" id="PTHR13857:SF26">
    <property type="entry name" value="C-U-EDITING ENZYME APOBEC-1"/>
    <property type="match status" value="1"/>
</dbReference>
<dbReference type="PANTHER" id="PTHR13857">
    <property type="entry name" value="MRNA EDITING ENZYME"/>
    <property type="match status" value="1"/>
</dbReference>
<dbReference type="Pfam" id="PF18774">
    <property type="entry name" value="APOBEC4_like"/>
    <property type="match status" value="1"/>
</dbReference>
<dbReference type="SUPFAM" id="SSF53927">
    <property type="entry name" value="Cytidine deaminase-like"/>
    <property type="match status" value="1"/>
</dbReference>
<dbReference type="PROSITE" id="PS00903">
    <property type="entry name" value="CYT_DCMP_DEAMINASES_1"/>
    <property type="match status" value="1"/>
</dbReference>
<dbReference type="PROSITE" id="PS51747">
    <property type="entry name" value="CYT_DCMP_DEAMINASES_2"/>
    <property type="match status" value="1"/>
</dbReference>
<sequence>MTSEKGPSTGDPTLRRRIEPWEFDVFYDPRELRKEACLLYEIKWGMSRKIWRSSGKNTTNHVEVNFIKKFTSERDFHPSMSCSITWFLSWSPCWECSQAIREFLSRHPGVTLVIYVARLFWHMDQQNRQGLRDLVNSGVTIQIMRASEYYHCWRNFVNYPPGDEAHWPQYPPLWMMLYALELHCIILSLPPCLKISRRWQNHLTFFRLHLQNCHYQTIPPHILLATGLIHPSVAWR</sequence>
<comment type="function">
    <text evidence="1 5 7 8">Cytidine deaminase catalyzing the cytidine to uridine postranscriptional editing of a variety of mRNAs (PubMed:30844405). Form complexes with cofactors that confer differential editing activity and selectivity. Responsible for the postranscriptional editing of a CAA codon for Gln to a UAA codon for stop in the apolipoprotein B mRNA (PubMed:24916387). Also involved in CGA (Arg) to UGA (Stop) editing in the NF1 mRNA (PubMed:11727199). May also play a role in the epigenetic regulation of gene expression by participating in DNA demethylation (By similarity).</text>
</comment>
<comment type="catalytic activity">
    <reaction evidence="8">
        <text>a cytidine in mRNA + H2O + H(+) = a uridine in mRNA + NH4(+)</text>
        <dbReference type="Rhea" id="RHEA:74355"/>
        <dbReference type="Rhea" id="RHEA-COMP:14658"/>
        <dbReference type="Rhea" id="RHEA-COMP:15145"/>
        <dbReference type="ChEBI" id="CHEBI:15377"/>
        <dbReference type="ChEBI" id="CHEBI:15378"/>
        <dbReference type="ChEBI" id="CHEBI:28938"/>
        <dbReference type="ChEBI" id="CHEBI:65315"/>
        <dbReference type="ChEBI" id="CHEBI:82748"/>
    </reaction>
    <physiologicalReaction direction="left-to-right" evidence="8">
        <dbReference type="Rhea" id="RHEA:74356"/>
    </physiologicalReaction>
</comment>
<comment type="catalytic activity">
    <reaction evidence="5">
        <text>cytidine(6666) in apoB mRNA + H2O + H(+) = uridine(6666) in apoB mRNA + NH4(+)</text>
        <dbReference type="Rhea" id="RHEA:21772"/>
        <dbReference type="Rhea" id="RHEA-COMP:13888"/>
        <dbReference type="Rhea" id="RHEA-COMP:13889"/>
        <dbReference type="ChEBI" id="CHEBI:15377"/>
        <dbReference type="ChEBI" id="CHEBI:15378"/>
        <dbReference type="ChEBI" id="CHEBI:28938"/>
        <dbReference type="ChEBI" id="CHEBI:65315"/>
        <dbReference type="ChEBI" id="CHEBI:82748"/>
        <dbReference type="EC" id="3.5.4.36"/>
    </reaction>
    <physiologicalReaction direction="left-to-right" evidence="5">
        <dbReference type="Rhea" id="RHEA:21773"/>
    </physiologicalReaction>
</comment>
<comment type="cofactor">
    <cofactor evidence="2">
        <name>Zn(2+)</name>
        <dbReference type="ChEBI" id="CHEBI:29105"/>
    </cofactor>
    <text evidence="2">Binds 1 Zn(2+) ion per subunit.</text>
</comment>
<comment type="subunit">
    <text evidence="4 7 8 9 11">Homodimer (PubMed:8078915). Interacts with A1CF; form an mRNA editing complex (PubMed:30844405). Interacts with RBM47; form an mRNA editing complex (PubMed:24916387, PubMed:30844405). Found in a complex with CELF2/CUGBP2 and A1CF. Interacts with HNRPAB (PubMed:8999813). Interacts with SYNCRIP (PubMed:11352648).</text>
</comment>
<comment type="interaction">
    <interactant intactId="EBI-12819523">
        <id>P41238</id>
    </interactant>
    <interactant intactId="EBI-295663">
        <id>Q00534</id>
        <label>CDK6</label>
    </interactant>
    <organismsDiffer>false</organismsDiffer>
    <experiments>3</experiments>
</comment>
<comment type="interaction">
    <interactant intactId="EBI-12819523">
        <id>P41238</id>
    </interactant>
    <interactant intactId="EBI-352986">
        <id>P52597</id>
        <label>HNRNPF</label>
    </interactant>
    <organismsDiffer>false</organismsDiffer>
    <experiments>3</experiments>
</comment>
<comment type="interaction">
    <interactant intactId="EBI-12819523">
        <id>P41238</id>
    </interactant>
    <interactant intactId="EBI-7060731">
        <id>P61978-2</id>
        <label>HNRNPK</label>
    </interactant>
    <organismsDiffer>false</organismsDiffer>
    <experiments>3</experiments>
</comment>
<comment type="interaction">
    <interactant intactId="EBI-12819523">
        <id>P41238</id>
    </interactant>
    <interactant intactId="EBI-1048945">
        <id>Q3LI72</id>
        <label>KRTAP19-5</label>
    </interactant>
    <organismsDiffer>false</organismsDiffer>
    <experiments>3</experiments>
</comment>
<comment type="interaction">
    <interactant intactId="EBI-12819523">
        <id>P41238</id>
    </interactant>
    <interactant intactId="EBI-12111050">
        <id>Q3LI64</id>
        <label>KRTAP6-1</label>
    </interactant>
    <organismsDiffer>false</organismsDiffer>
    <experiments>3</experiments>
</comment>
<comment type="interaction">
    <interactant intactId="EBI-12819523">
        <id>P41238</id>
    </interactant>
    <interactant intactId="EBI-11962084">
        <id>Q3LI66</id>
        <label>KRTAP6-2</label>
    </interactant>
    <organismsDiffer>false</organismsDiffer>
    <experiments>3</experiments>
</comment>
<comment type="interaction">
    <interactant intactId="EBI-12819523">
        <id>P41238</id>
    </interactant>
    <interactant intactId="EBI-17490746">
        <id>A8MTQ0</id>
        <label>NOTO</label>
    </interactant>
    <organismsDiffer>false</organismsDiffer>
    <experiments>3</experiments>
</comment>
<comment type="interaction">
    <interactant intactId="EBI-12819523">
        <id>P41238</id>
    </interactant>
    <interactant intactId="EBI-11153325">
        <id>Q9NUQ7</id>
        <label>UFSP2</label>
    </interactant>
    <organismsDiffer>false</organismsDiffer>
    <experiments>3</experiments>
</comment>
<comment type="subcellular location">
    <subcellularLocation>
        <location evidence="6">Cytoplasm</location>
    </subcellularLocation>
    <subcellularLocation>
        <location evidence="7">Nucleus</location>
    </subcellularLocation>
</comment>
<comment type="tissue specificity">
    <text evidence="9">Expressed exclusively in the small intestine.</text>
</comment>
<comment type="similarity">
    <text evidence="17">Belongs to the cytidine and deoxycytidylate deaminase family.</text>
</comment>
<accession>P41238</accession>
<accession>Q9UE64</accession>
<accession>Q9UM71</accession>
<evidence type="ECO:0000250" key="1">
    <source>
        <dbReference type="UniProtKB" id="P51908"/>
    </source>
</evidence>
<evidence type="ECO:0000250" key="2">
    <source>
        <dbReference type="UniProtKB" id="Q9Y235"/>
    </source>
</evidence>
<evidence type="ECO:0000255" key="3">
    <source>
        <dbReference type="PROSITE-ProRule" id="PRU01083"/>
    </source>
</evidence>
<evidence type="ECO:0000269" key="4">
    <source>
    </source>
</evidence>
<evidence type="ECO:0000269" key="5">
    <source>
    </source>
</evidence>
<evidence type="ECO:0000269" key="6">
    <source>
    </source>
</evidence>
<evidence type="ECO:0000269" key="7">
    <source>
    </source>
</evidence>
<evidence type="ECO:0000269" key="8">
    <source>
    </source>
</evidence>
<evidence type="ECO:0000269" key="9">
    <source>
    </source>
</evidence>
<evidence type="ECO:0000269" key="10">
    <source>
    </source>
</evidence>
<evidence type="ECO:0000269" key="11">
    <source>
    </source>
</evidence>
<evidence type="ECO:0000269" key="12">
    <source>
    </source>
</evidence>
<evidence type="ECO:0000269" key="13">
    <source>
    </source>
</evidence>
<evidence type="ECO:0000303" key="14">
    <source>
    </source>
</evidence>
<evidence type="ECO:0000303" key="15">
    <source>
    </source>
</evidence>
<evidence type="ECO:0000303" key="16">
    <source>
    </source>
</evidence>
<evidence type="ECO:0000305" key="17"/>
<evidence type="ECO:0000305" key="18">
    <source>
    </source>
</evidence>
<evidence type="ECO:0000312" key="19">
    <source>
        <dbReference type="HGNC" id="HGNC:604"/>
    </source>
</evidence>
<protein>
    <recommendedName>
        <fullName evidence="18">C-&gt;U-editing enzyme APOBEC-1</fullName>
        <ecNumber evidence="5 8">3.5.4.-</ecNumber>
    </recommendedName>
    <alternativeName>
        <fullName evidence="19">Apolipoprotein B mRNA-editing enzyme catalytic subunit 1</fullName>
        <shortName evidence="14">APO1</shortName>
        <shortName evidence="16">APOBEC-1</shortName>
        <shortName>Apolipoprotein B mRNA-editing enzyme 1</shortName>
        <ecNumber evidence="5">3.5.4.36</ecNumber>
    </alternativeName>
    <alternativeName>
        <fullName evidence="15">HEPR</fullName>
    </alternativeName>
    <alternativeName>
        <fullName evidence="18">mRNA(cytosine(6666)) deaminase 1</fullName>
    </alternativeName>
</protein>
<gene>
    <name evidence="19" type="primary">APOBEC1</name>
</gene>
<proteinExistence type="evidence at protein level"/>
<keyword id="KW-0002">3D-structure</keyword>
<keyword id="KW-0963">Cytoplasm</keyword>
<keyword id="KW-0378">Hydrolase</keyword>
<keyword id="KW-0479">Metal-binding</keyword>
<keyword id="KW-0507">mRNA processing</keyword>
<keyword id="KW-0539">Nucleus</keyword>
<keyword id="KW-1185">Reference proteome</keyword>
<keyword id="KW-0862">Zinc</keyword>
<organism>
    <name type="scientific">Homo sapiens</name>
    <name type="common">Human</name>
    <dbReference type="NCBI Taxonomy" id="9606"/>
    <lineage>
        <taxon>Eukaryota</taxon>
        <taxon>Metazoa</taxon>
        <taxon>Chordata</taxon>
        <taxon>Craniata</taxon>
        <taxon>Vertebrata</taxon>
        <taxon>Euteleostomi</taxon>
        <taxon>Mammalia</taxon>
        <taxon>Eutheria</taxon>
        <taxon>Euarchontoglires</taxon>
        <taxon>Primates</taxon>
        <taxon>Haplorrhini</taxon>
        <taxon>Catarrhini</taxon>
        <taxon>Hominidae</taxon>
        <taxon>Homo</taxon>
    </lineage>
</organism>